<organism>
    <name type="scientific">Xanthomonas euvesicatoria pv. vesicatoria (strain 85-10)</name>
    <name type="common">Xanthomonas campestris pv. vesicatoria</name>
    <dbReference type="NCBI Taxonomy" id="316273"/>
    <lineage>
        <taxon>Bacteria</taxon>
        <taxon>Pseudomonadati</taxon>
        <taxon>Pseudomonadota</taxon>
        <taxon>Gammaproteobacteria</taxon>
        <taxon>Lysobacterales</taxon>
        <taxon>Lysobacteraceae</taxon>
        <taxon>Xanthomonas</taxon>
    </lineage>
</organism>
<gene>
    <name evidence="1" type="primary">hflD</name>
    <name type="ordered locus">XCV2045</name>
</gene>
<comment type="subcellular location">
    <subcellularLocation>
        <location>Cytoplasm</location>
    </subcellularLocation>
    <subcellularLocation>
        <location evidence="1">Cell inner membrane</location>
        <topology evidence="1">Peripheral membrane protein</topology>
        <orientation evidence="1">Cytoplasmic side</orientation>
    </subcellularLocation>
</comment>
<comment type="similarity">
    <text evidence="1">Belongs to the HflD family.</text>
</comment>
<proteinExistence type="inferred from homology"/>
<evidence type="ECO:0000255" key="1">
    <source>
        <dbReference type="HAMAP-Rule" id="MF_00695"/>
    </source>
</evidence>
<reference key="1">
    <citation type="journal article" date="2005" name="J. Bacteriol.">
        <title>Insights into genome plasticity and pathogenicity of the plant pathogenic Bacterium Xanthomonas campestris pv. vesicatoria revealed by the complete genome sequence.</title>
        <authorList>
            <person name="Thieme F."/>
            <person name="Koebnik R."/>
            <person name="Bekel T."/>
            <person name="Berger C."/>
            <person name="Boch J."/>
            <person name="Buettner D."/>
            <person name="Caldana C."/>
            <person name="Gaigalat L."/>
            <person name="Goesmann A."/>
            <person name="Kay S."/>
            <person name="Kirchner O."/>
            <person name="Lanz C."/>
            <person name="Linke B."/>
            <person name="McHardy A.C."/>
            <person name="Meyer F."/>
            <person name="Mittenhuber G."/>
            <person name="Nies D.H."/>
            <person name="Niesbach-Kloesgen U."/>
            <person name="Patschkowski T."/>
            <person name="Rueckert C."/>
            <person name="Rupp O."/>
            <person name="Schneiker S."/>
            <person name="Schuster S.C."/>
            <person name="Vorhoelter F.J."/>
            <person name="Weber E."/>
            <person name="Puehler A."/>
            <person name="Bonas U."/>
            <person name="Bartels D."/>
            <person name="Kaiser O."/>
        </authorList>
    </citation>
    <scope>NUCLEOTIDE SEQUENCE [LARGE SCALE GENOMIC DNA]</scope>
    <source>
        <strain>85-10</strain>
    </source>
</reference>
<name>HFLD_XANE5</name>
<accession>Q3BTY7</accession>
<keyword id="KW-0997">Cell inner membrane</keyword>
<keyword id="KW-1003">Cell membrane</keyword>
<keyword id="KW-0963">Cytoplasm</keyword>
<keyword id="KW-0472">Membrane</keyword>
<feature type="chain" id="PRO_1000045453" description="High frequency lysogenization protein HflD homolog">
    <location>
        <begin position="1"/>
        <end position="204"/>
    </location>
</feature>
<sequence>MSVSMDHRVLALAGVAQALQQVRRIAETGHSEAATVRTAMDSVFRVDAASPEAVYGSAAALAPGLRLLHNYFRNQGQDEVLPRLALAVLQLERRFVRDTSTVATVASGIDAAARQAQQLGDSSHPDVLSSLGGLYAQTISHLRPKVMVQGNPHYLGQAGVVAEIRALLLAAVRSAVLWRQMGGNLWDFLFAKRAMIEAVDRALR</sequence>
<dbReference type="EMBL" id="AM039952">
    <property type="protein sequence ID" value="CAJ23722.1"/>
    <property type="molecule type" value="Genomic_DNA"/>
</dbReference>
<dbReference type="RefSeq" id="WP_011347296.1">
    <property type="nucleotide sequence ID" value="NZ_CP017190.1"/>
</dbReference>
<dbReference type="SMR" id="Q3BTY7"/>
<dbReference type="STRING" id="456327.BJD11_12200"/>
<dbReference type="KEGG" id="xcv:XCV2045"/>
<dbReference type="eggNOG" id="COG2915">
    <property type="taxonomic scope" value="Bacteria"/>
</dbReference>
<dbReference type="HOGENOM" id="CLU_098920_0_0_6"/>
<dbReference type="Proteomes" id="UP000007069">
    <property type="component" value="Chromosome"/>
</dbReference>
<dbReference type="GO" id="GO:0005737">
    <property type="term" value="C:cytoplasm"/>
    <property type="evidence" value="ECO:0007669"/>
    <property type="project" value="UniProtKB-SubCell"/>
</dbReference>
<dbReference type="GO" id="GO:0005886">
    <property type="term" value="C:plasma membrane"/>
    <property type="evidence" value="ECO:0007669"/>
    <property type="project" value="UniProtKB-SubCell"/>
</dbReference>
<dbReference type="Gene3D" id="1.10.3890.10">
    <property type="entry name" value="HflD-like"/>
    <property type="match status" value="1"/>
</dbReference>
<dbReference type="HAMAP" id="MF_00695">
    <property type="entry name" value="HflD_protein"/>
    <property type="match status" value="1"/>
</dbReference>
<dbReference type="InterPro" id="IPR007451">
    <property type="entry name" value="HflD"/>
</dbReference>
<dbReference type="InterPro" id="IPR035932">
    <property type="entry name" value="HflD-like_sf"/>
</dbReference>
<dbReference type="NCBIfam" id="NF001246">
    <property type="entry name" value="PRK00218.1-2"/>
    <property type="match status" value="1"/>
</dbReference>
<dbReference type="NCBIfam" id="NF001250">
    <property type="entry name" value="PRK00218.1-6"/>
    <property type="match status" value="1"/>
</dbReference>
<dbReference type="PANTHER" id="PTHR38100">
    <property type="entry name" value="HIGH FREQUENCY LYSOGENIZATION PROTEIN HFLD"/>
    <property type="match status" value="1"/>
</dbReference>
<dbReference type="PANTHER" id="PTHR38100:SF1">
    <property type="entry name" value="HIGH FREQUENCY LYSOGENIZATION PROTEIN HFLD"/>
    <property type="match status" value="1"/>
</dbReference>
<dbReference type="Pfam" id="PF04356">
    <property type="entry name" value="DUF489"/>
    <property type="match status" value="1"/>
</dbReference>
<dbReference type="SUPFAM" id="SSF101322">
    <property type="entry name" value="YcfC-like"/>
    <property type="match status" value="1"/>
</dbReference>
<protein>
    <recommendedName>
        <fullName evidence="1">High frequency lysogenization protein HflD homolog</fullName>
    </recommendedName>
</protein>